<protein>
    <recommendedName>
        <fullName evidence="1">Putative phosphoenolpyruvate synthase regulatory protein</fullName>
        <shortName evidence="1">PEP synthase regulatory protein</shortName>
        <shortName evidence="1">PSRP</shortName>
        <ecNumber evidence="1">2.7.11.33</ecNumber>
        <ecNumber evidence="1">2.7.4.28</ecNumber>
    </recommendedName>
    <alternativeName>
        <fullName evidence="1">Pyruvate, water dikinase regulatory protein</fullName>
    </alternativeName>
</protein>
<name>PSRP_VIBA3</name>
<proteinExistence type="inferred from homology"/>
<comment type="function">
    <text evidence="1">Bifunctional serine/threonine kinase and phosphorylase involved in the regulation of the phosphoenolpyruvate synthase (PEPS) by catalyzing its phosphorylation/dephosphorylation.</text>
</comment>
<comment type="catalytic activity">
    <reaction evidence="1">
        <text>[pyruvate, water dikinase] + ADP = [pyruvate, water dikinase]-phosphate + AMP + H(+)</text>
        <dbReference type="Rhea" id="RHEA:46020"/>
        <dbReference type="Rhea" id="RHEA-COMP:11425"/>
        <dbReference type="Rhea" id="RHEA-COMP:11426"/>
        <dbReference type="ChEBI" id="CHEBI:15378"/>
        <dbReference type="ChEBI" id="CHEBI:43176"/>
        <dbReference type="ChEBI" id="CHEBI:68546"/>
        <dbReference type="ChEBI" id="CHEBI:456215"/>
        <dbReference type="ChEBI" id="CHEBI:456216"/>
        <dbReference type="EC" id="2.7.11.33"/>
    </reaction>
</comment>
<comment type="catalytic activity">
    <reaction evidence="1">
        <text>[pyruvate, water dikinase]-phosphate + phosphate + H(+) = [pyruvate, water dikinase] + diphosphate</text>
        <dbReference type="Rhea" id="RHEA:48580"/>
        <dbReference type="Rhea" id="RHEA-COMP:11425"/>
        <dbReference type="Rhea" id="RHEA-COMP:11426"/>
        <dbReference type="ChEBI" id="CHEBI:15378"/>
        <dbReference type="ChEBI" id="CHEBI:33019"/>
        <dbReference type="ChEBI" id="CHEBI:43176"/>
        <dbReference type="ChEBI" id="CHEBI:43474"/>
        <dbReference type="ChEBI" id="CHEBI:68546"/>
        <dbReference type="EC" id="2.7.4.28"/>
    </reaction>
</comment>
<comment type="similarity">
    <text evidence="1">Belongs to the pyruvate, phosphate/water dikinase regulatory protein family. PSRP subfamily.</text>
</comment>
<accession>B7VSY8</accession>
<gene>
    <name type="ordered locus">VS_II1224</name>
</gene>
<dbReference type="EC" id="2.7.11.33" evidence="1"/>
<dbReference type="EC" id="2.7.4.28" evidence="1"/>
<dbReference type="EMBL" id="FM954973">
    <property type="protein sequence ID" value="CAV27227.1"/>
    <property type="molecule type" value="Genomic_DNA"/>
</dbReference>
<dbReference type="SMR" id="B7VSY8"/>
<dbReference type="STRING" id="575788.VS_II1224"/>
<dbReference type="KEGG" id="vsp:VS_II1224"/>
<dbReference type="eggNOG" id="COG1806">
    <property type="taxonomic scope" value="Bacteria"/>
</dbReference>
<dbReference type="HOGENOM" id="CLU_046206_1_0_6"/>
<dbReference type="Proteomes" id="UP000009100">
    <property type="component" value="Chromosome 2"/>
</dbReference>
<dbReference type="GO" id="GO:0043531">
    <property type="term" value="F:ADP binding"/>
    <property type="evidence" value="ECO:0007669"/>
    <property type="project" value="UniProtKB-UniRule"/>
</dbReference>
<dbReference type="GO" id="GO:0005524">
    <property type="term" value="F:ATP binding"/>
    <property type="evidence" value="ECO:0007669"/>
    <property type="project" value="InterPro"/>
</dbReference>
<dbReference type="GO" id="GO:0016776">
    <property type="term" value="F:phosphotransferase activity, phosphate group as acceptor"/>
    <property type="evidence" value="ECO:0007669"/>
    <property type="project" value="UniProtKB-UniRule"/>
</dbReference>
<dbReference type="GO" id="GO:0004674">
    <property type="term" value="F:protein serine/threonine kinase activity"/>
    <property type="evidence" value="ECO:0007669"/>
    <property type="project" value="UniProtKB-UniRule"/>
</dbReference>
<dbReference type="HAMAP" id="MF_01062">
    <property type="entry name" value="PSRP"/>
    <property type="match status" value="1"/>
</dbReference>
<dbReference type="InterPro" id="IPR005177">
    <property type="entry name" value="Kinase-pyrophosphorylase"/>
</dbReference>
<dbReference type="InterPro" id="IPR026530">
    <property type="entry name" value="PSRP"/>
</dbReference>
<dbReference type="NCBIfam" id="NF003742">
    <property type="entry name" value="PRK05339.1"/>
    <property type="match status" value="1"/>
</dbReference>
<dbReference type="PANTHER" id="PTHR31756">
    <property type="entry name" value="PYRUVATE, PHOSPHATE DIKINASE REGULATORY PROTEIN 1, CHLOROPLASTIC"/>
    <property type="match status" value="1"/>
</dbReference>
<dbReference type="PANTHER" id="PTHR31756:SF3">
    <property type="entry name" value="PYRUVATE, PHOSPHATE DIKINASE REGULATORY PROTEIN 1, CHLOROPLASTIC"/>
    <property type="match status" value="1"/>
</dbReference>
<dbReference type="Pfam" id="PF03618">
    <property type="entry name" value="Kinase-PPPase"/>
    <property type="match status" value="1"/>
</dbReference>
<feature type="chain" id="PRO_1000149719" description="Putative phosphoenolpyruvate synthase regulatory protein">
    <location>
        <begin position="1"/>
        <end position="277"/>
    </location>
</feature>
<feature type="binding site" evidence="1">
    <location>
        <begin position="157"/>
        <end position="164"/>
    </location>
    <ligand>
        <name>ADP</name>
        <dbReference type="ChEBI" id="CHEBI:456216"/>
    </ligand>
</feature>
<organism>
    <name type="scientific">Vibrio atlanticus (strain LGP32)</name>
    <name type="common">Vibrio splendidus (strain Mel32)</name>
    <dbReference type="NCBI Taxonomy" id="575788"/>
    <lineage>
        <taxon>Bacteria</taxon>
        <taxon>Pseudomonadati</taxon>
        <taxon>Pseudomonadota</taxon>
        <taxon>Gammaproteobacteria</taxon>
        <taxon>Vibrionales</taxon>
        <taxon>Vibrionaceae</taxon>
        <taxon>Vibrio</taxon>
    </lineage>
</organism>
<sequence length="277" mass="31641">MQIDIQSRDVFYVSDGTAITCETLGHVVLGQFPFEANEKTFPFVESEDKLSDLLKEIEISYRATGHEPLVFFSIVIPEIKLKLLDAPAHCYDVLESIVQKVQDDTKMAPKPKLQRSRSVNKDSDKYFDRIAAIEYTLAHDDGITLKGLEEADIILLGVSRSGKTPTSLYMAMQFGLRVANYPFIHDDIARLRLLPEFEIYRHKLFGLTIDAERLTEIRENRLAGSEYASDSQCLYELQTVEGLFRREAIPYINTSSLSVEEISTRILERTGLRRRLL</sequence>
<keyword id="KW-0418">Kinase</keyword>
<keyword id="KW-0547">Nucleotide-binding</keyword>
<keyword id="KW-0723">Serine/threonine-protein kinase</keyword>
<keyword id="KW-0808">Transferase</keyword>
<evidence type="ECO:0000255" key="1">
    <source>
        <dbReference type="HAMAP-Rule" id="MF_01062"/>
    </source>
</evidence>
<reference key="1">
    <citation type="submission" date="2009-02" db="EMBL/GenBank/DDBJ databases">
        <title>Vibrio splendidus str. LGP32 complete genome.</title>
        <authorList>
            <person name="Mazel D."/>
            <person name="Le Roux F."/>
        </authorList>
    </citation>
    <scope>NUCLEOTIDE SEQUENCE [LARGE SCALE GENOMIC DNA]</scope>
    <source>
        <strain>LGP32</strain>
    </source>
</reference>